<sequence>MNKSKRLFTKSKRSFRRRLPPIQSGDRIDYRNMSLISRFISEQGKILSRRVNRVTLKQQRLITIAIKQARILSLLPFLNNQKQFERSESTPRTTSLRTRKK</sequence>
<name>RR18_ARATH</name>
<evidence type="ECO:0000303" key="1">
    <source>
    </source>
</evidence>
<evidence type="ECO:0000305" key="2"/>
<accession>P56807</accession>
<organism>
    <name type="scientific">Arabidopsis thaliana</name>
    <name type="common">Mouse-ear cress</name>
    <dbReference type="NCBI Taxonomy" id="3702"/>
    <lineage>
        <taxon>Eukaryota</taxon>
        <taxon>Viridiplantae</taxon>
        <taxon>Streptophyta</taxon>
        <taxon>Embryophyta</taxon>
        <taxon>Tracheophyta</taxon>
        <taxon>Spermatophyta</taxon>
        <taxon>Magnoliopsida</taxon>
        <taxon>eudicotyledons</taxon>
        <taxon>Gunneridae</taxon>
        <taxon>Pentapetalae</taxon>
        <taxon>rosids</taxon>
        <taxon>malvids</taxon>
        <taxon>Brassicales</taxon>
        <taxon>Brassicaceae</taxon>
        <taxon>Camelineae</taxon>
        <taxon>Arabidopsis</taxon>
    </lineage>
</organism>
<geneLocation type="chloroplast"/>
<gene>
    <name type="primary">rps18</name>
    <name type="ordered locus">AtCg00650</name>
</gene>
<feature type="chain" id="PRO_0000111276" description="Small ribosomal subunit protein bS18c">
    <location>
        <begin position="1"/>
        <end position="101"/>
    </location>
</feature>
<comment type="subunit">
    <text>Part of the 30S ribosomal subunit.</text>
</comment>
<comment type="subcellular location">
    <subcellularLocation>
        <location evidence="2">Plastid</location>
        <location evidence="2">Chloroplast</location>
    </subcellularLocation>
</comment>
<comment type="similarity">
    <text evidence="2">Belongs to the bacterial ribosomal protein bS18 family.</text>
</comment>
<keyword id="KW-0150">Chloroplast</keyword>
<keyword id="KW-0934">Plastid</keyword>
<keyword id="KW-1185">Reference proteome</keyword>
<keyword id="KW-0687">Ribonucleoprotein</keyword>
<keyword id="KW-0689">Ribosomal protein</keyword>
<keyword id="KW-0694">RNA-binding</keyword>
<keyword id="KW-0699">rRNA-binding</keyword>
<protein>
    <recommendedName>
        <fullName evidence="1">Small ribosomal subunit protein bS18c</fullName>
    </recommendedName>
    <alternativeName>
        <fullName>30S ribosomal protein S18, chloroplastic</fullName>
    </alternativeName>
</protein>
<reference key="1">
    <citation type="journal article" date="1999" name="DNA Res.">
        <title>Complete structure of the chloroplast genome of Arabidopsis thaliana.</title>
        <authorList>
            <person name="Sato S."/>
            <person name="Nakamura Y."/>
            <person name="Kaneko T."/>
            <person name="Asamizu E."/>
            <person name="Tabata S."/>
        </authorList>
    </citation>
    <scope>NUCLEOTIDE SEQUENCE [LARGE SCALE GENOMIC DNA]</scope>
    <source>
        <strain>cv. Columbia</strain>
    </source>
</reference>
<reference key="2">
    <citation type="journal article" date="2023" name="Plant Cell">
        <title>An updated nomenclature for plant ribosomal protein genes.</title>
        <authorList>
            <person name="Scarpin M.R."/>
            <person name="Busche M."/>
            <person name="Martinez R.E."/>
            <person name="Harper L.C."/>
            <person name="Reiser L."/>
            <person name="Szakonyi D."/>
            <person name="Merchante C."/>
            <person name="Lan T."/>
            <person name="Xiong W."/>
            <person name="Mo B."/>
            <person name="Tang G."/>
            <person name="Chen X."/>
            <person name="Bailey-Serres J."/>
            <person name="Browning K.S."/>
            <person name="Brunkard J.O."/>
        </authorList>
    </citation>
    <scope>NOMENCLATURE</scope>
</reference>
<proteinExistence type="inferred from homology"/>
<dbReference type="EMBL" id="AP000423">
    <property type="protein sequence ID" value="BAA84407.1"/>
    <property type="molecule type" value="Genomic_DNA"/>
</dbReference>
<dbReference type="RefSeq" id="NP_051081.1">
    <property type="nucleotide sequence ID" value="NC_000932.1"/>
</dbReference>
<dbReference type="SMR" id="P56807"/>
<dbReference type="BioGRID" id="29942">
    <property type="interactions" value="21"/>
</dbReference>
<dbReference type="FunCoup" id="P56807">
    <property type="interactions" value="1153"/>
</dbReference>
<dbReference type="STRING" id="3702.P56807"/>
<dbReference type="iPTMnet" id="P56807"/>
<dbReference type="PaxDb" id="3702-ATCG00650.1"/>
<dbReference type="ProteomicsDB" id="228249"/>
<dbReference type="EnsemblPlants" id="ATCG00650.1">
    <property type="protein sequence ID" value="ATCG00650.1"/>
    <property type="gene ID" value="ATCG00650"/>
</dbReference>
<dbReference type="GeneID" id="844736"/>
<dbReference type="Gramene" id="ATCG00650.1">
    <property type="protein sequence ID" value="ATCG00650.1"/>
    <property type="gene ID" value="ATCG00650"/>
</dbReference>
<dbReference type="KEGG" id="ath:ArthCp044"/>
<dbReference type="Araport" id="ATCG00650"/>
<dbReference type="TAIR" id="ATCG00650">
    <property type="gene designation" value="RPS18"/>
</dbReference>
<dbReference type="eggNOG" id="KOG3162">
    <property type="taxonomic scope" value="Eukaryota"/>
</dbReference>
<dbReference type="HOGENOM" id="CLU_2296586_0_0_1"/>
<dbReference type="InParanoid" id="P56807"/>
<dbReference type="OMA" id="QRTSPIN"/>
<dbReference type="PRO" id="PR:P56807"/>
<dbReference type="Proteomes" id="UP000006548">
    <property type="component" value="Chloroplast Pltd"/>
</dbReference>
<dbReference type="ExpressionAtlas" id="P56807">
    <property type="expression patterns" value="baseline and differential"/>
</dbReference>
<dbReference type="GO" id="GO:0009507">
    <property type="term" value="C:chloroplast"/>
    <property type="evidence" value="ECO:0007005"/>
    <property type="project" value="TAIR"/>
</dbReference>
<dbReference type="GO" id="GO:0009941">
    <property type="term" value="C:chloroplast envelope"/>
    <property type="evidence" value="ECO:0007005"/>
    <property type="project" value="TAIR"/>
</dbReference>
<dbReference type="GO" id="GO:0009570">
    <property type="term" value="C:chloroplast stroma"/>
    <property type="evidence" value="ECO:0007005"/>
    <property type="project" value="TAIR"/>
</dbReference>
<dbReference type="GO" id="GO:0009536">
    <property type="term" value="C:plastid"/>
    <property type="evidence" value="ECO:0007005"/>
    <property type="project" value="TAIR"/>
</dbReference>
<dbReference type="GO" id="GO:1990904">
    <property type="term" value="C:ribonucleoprotein complex"/>
    <property type="evidence" value="ECO:0007669"/>
    <property type="project" value="UniProtKB-KW"/>
</dbReference>
<dbReference type="GO" id="GO:0005840">
    <property type="term" value="C:ribosome"/>
    <property type="evidence" value="ECO:0007669"/>
    <property type="project" value="UniProtKB-KW"/>
</dbReference>
<dbReference type="GO" id="GO:0003729">
    <property type="term" value="F:mRNA binding"/>
    <property type="evidence" value="ECO:0000314"/>
    <property type="project" value="TAIR"/>
</dbReference>
<dbReference type="GO" id="GO:0019843">
    <property type="term" value="F:rRNA binding"/>
    <property type="evidence" value="ECO:0007669"/>
    <property type="project" value="UniProtKB-UniRule"/>
</dbReference>
<dbReference type="GO" id="GO:0003735">
    <property type="term" value="F:structural constituent of ribosome"/>
    <property type="evidence" value="ECO:0007669"/>
    <property type="project" value="InterPro"/>
</dbReference>
<dbReference type="GO" id="GO:0006412">
    <property type="term" value="P:translation"/>
    <property type="evidence" value="ECO:0007669"/>
    <property type="project" value="UniProtKB-UniRule"/>
</dbReference>
<dbReference type="FunFam" id="4.10.640.10:FF:000002">
    <property type="entry name" value="30S ribosomal protein S18, chloroplastic"/>
    <property type="match status" value="1"/>
</dbReference>
<dbReference type="Gene3D" id="4.10.640.10">
    <property type="entry name" value="Ribosomal protein S18"/>
    <property type="match status" value="1"/>
</dbReference>
<dbReference type="HAMAP" id="MF_00270">
    <property type="entry name" value="Ribosomal_bS18"/>
    <property type="match status" value="1"/>
</dbReference>
<dbReference type="InterPro" id="IPR001648">
    <property type="entry name" value="Ribosomal_bS18"/>
</dbReference>
<dbReference type="InterPro" id="IPR018275">
    <property type="entry name" value="Ribosomal_bS18_CS"/>
</dbReference>
<dbReference type="InterPro" id="IPR036870">
    <property type="entry name" value="Ribosomal_bS18_sf"/>
</dbReference>
<dbReference type="NCBIfam" id="TIGR00165">
    <property type="entry name" value="S18"/>
    <property type="match status" value="1"/>
</dbReference>
<dbReference type="PANTHER" id="PTHR13479">
    <property type="entry name" value="30S RIBOSOMAL PROTEIN S18"/>
    <property type="match status" value="1"/>
</dbReference>
<dbReference type="PANTHER" id="PTHR13479:SF40">
    <property type="entry name" value="SMALL RIBOSOMAL SUBUNIT PROTEIN BS18M"/>
    <property type="match status" value="1"/>
</dbReference>
<dbReference type="Pfam" id="PF01084">
    <property type="entry name" value="Ribosomal_S18"/>
    <property type="match status" value="1"/>
</dbReference>
<dbReference type="PRINTS" id="PR00974">
    <property type="entry name" value="RIBOSOMALS18"/>
</dbReference>
<dbReference type="SUPFAM" id="SSF46911">
    <property type="entry name" value="Ribosomal protein S18"/>
    <property type="match status" value="1"/>
</dbReference>
<dbReference type="PROSITE" id="PS00057">
    <property type="entry name" value="RIBOSOMAL_S18"/>
    <property type="match status" value="1"/>
</dbReference>